<gene>
    <name evidence="2" type="primary">SYNC1</name>
    <name evidence="3" type="synonym">EMB2755</name>
    <name type="ordered locus">At5g56680</name>
    <name type="ORF">MIK19.13</name>
</gene>
<feature type="initiator methionine" description="Removed" evidence="7">
    <location>
        <position position="1"/>
    </location>
</feature>
<feature type="chain" id="PRO_0000176491" description="Asparagine--tRNA ligase, cytoplasmic 1">
    <location>
        <begin position="2"/>
        <end position="572"/>
    </location>
</feature>
<feature type="domain" description="WHEP-TRS">
    <location>
        <begin position="236"/>
        <end position="292"/>
    </location>
</feature>
<feature type="DNA-binding region" description="OB" evidence="1">
    <location>
        <begin position="53"/>
        <end position="131"/>
    </location>
</feature>
<feature type="modified residue" description="N-acetylalanine" evidence="7">
    <location>
        <position position="2"/>
    </location>
</feature>
<keyword id="KW-0007">Acetylation</keyword>
<keyword id="KW-0030">Aminoacyl-tRNA synthetase</keyword>
<keyword id="KW-0067">ATP-binding</keyword>
<keyword id="KW-0963">Cytoplasm</keyword>
<keyword id="KW-0238">DNA-binding</keyword>
<keyword id="KW-0436">Ligase</keyword>
<keyword id="KW-0547">Nucleotide-binding</keyword>
<keyword id="KW-0648">Protein biosynthesis</keyword>
<keyword id="KW-1185">Reference proteome</keyword>
<dbReference type="EC" id="6.1.1.22" evidence="4"/>
<dbReference type="EMBL" id="AF170909">
    <property type="protein sequence ID" value="AAD46681.1"/>
    <property type="molecule type" value="mRNA"/>
</dbReference>
<dbReference type="EMBL" id="AB013392">
    <property type="protein sequence ID" value="BAB09886.1"/>
    <property type="molecule type" value="Genomic_DNA"/>
</dbReference>
<dbReference type="EMBL" id="CP002688">
    <property type="protein sequence ID" value="AED96795.1"/>
    <property type="molecule type" value="Genomic_DNA"/>
</dbReference>
<dbReference type="EMBL" id="BT030358">
    <property type="protein sequence ID" value="ABO38771.1"/>
    <property type="molecule type" value="mRNA"/>
</dbReference>
<dbReference type="RefSeq" id="NP_200479.1">
    <property type="nucleotide sequence ID" value="NM_125051.4"/>
</dbReference>
<dbReference type="SMR" id="Q9SW96"/>
<dbReference type="BioGRID" id="21013">
    <property type="interactions" value="2"/>
</dbReference>
<dbReference type="FunCoup" id="Q9SW96">
    <property type="interactions" value="3444"/>
</dbReference>
<dbReference type="IntAct" id="Q9SW96">
    <property type="interactions" value="1"/>
</dbReference>
<dbReference type="STRING" id="3702.Q9SW96"/>
<dbReference type="GlyGen" id="Q9SW96">
    <property type="glycosylation" value="1 site"/>
</dbReference>
<dbReference type="iPTMnet" id="Q9SW96"/>
<dbReference type="PaxDb" id="3702-AT5G56680.1"/>
<dbReference type="ProteomicsDB" id="245286"/>
<dbReference type="EnsemblPlants" id="AT5G56680.1">
    <property type="protein sequence ID" value="AT5G56680.1"/>
    <property type="gene ID" value="AT5G56680"/>
</dbReference>
<dbReference type="GeneID" id="835769"/>
<dbReference type="Gramene" id="AT5G56680.1">
    <property type="protein sequence ID" value="AT5G56680.1"/>
    <property type="gene ID" value="AT5G56680"/>
</dbReference>
<dbReference type="KEGG" id="ath:AT5G56680"/>
<dbReference type="Araport" id="AT5G56680"/>
<dbReference type="TAIR" id="AT5G56680">
    <property type="gene designation" value="SYNC1"/>
</dbReference>
<dbReference type="eggNOG" id="KOG0554">
    <property type="taxonomic scope" value="Eukaryota"/>
</dbReference>
<dbReference type="HOGENOM" id="CLU_004553_2_0_1"/>
<dbReference type="InParanoid" id="Q9SW96"/>
<dbReference type="OMA" id="PRFPGQC"/>
<dbReference type="OrthoDB" id="1931232at2759"/>
<dbReference type="PhylomeDB" id="Q9SW96"/>
<dbReference type="PRO" id="PR:Q9SW96"/>
<dbReference type="Proteomes" id="UP000006548">
    <property type="component" value="Chromosome 5"/>
</dbReference>
<dbReference type="ExpressionAtlas" id="Q9SW96">
    <property type="expression patterns" value="baseline and differential"/>
</dbReference>
<dbReference type="GO" id="GO:0009507">
    <property type="term" value="C:chloroplast"/>
    <property type="evidence" value="ECO:0000314"/>
    <property type="project" value="TAIR"/>
</dbReference>
<dbReference type="GO" id="GO:0005829">
    <property type="term" value="C:cytosol"/>
    <property type="evidence" value="ECO:0007005"/>
    <property type="project" value="TAIR"/>
</dbReference>
<dbReference type="GO" id="GO:0005739">
    <property type="term" value="C:mitochondrion"/>
    <property type="evidence" value="ECO:0000314"/>
    <property type="project" value="TAIR"/>
</dbReference>
<dbReference type="GO" id="GO:0009536">
    <property type="term" value="C:plastid"/>
    <property type="evidence" value="ECO:0007005"/>
    <property type="project" value="TAIR"/>
</dbReference>
<dbReference type="GO" id="GO:0004816">
    <property type="term" value="F:asparagine-tRNA ligase activity"/>
    <property type="evidence" value="ECO:0007669"/>
    <property type="project" value="UniProtKB-EC"/>
</dbReference>
<dbReference type="GO" id="GO:0005524">
    <property type="term" value="F:ATP binding"/>
    <property type="evidence" value="ECO:0007669"/>
    <property type="project" value="UniProtKB-KW"/>
</dbReference>
<dbReference type="GO" id="GO:0003677">
    <property type="term" value="F:DNA binding"/>
    <property type="evidence" value="ECO:0007669"/>
    <property type="project" value="UniProtKB-KW"/>
</dbReference>
<dbReference type="GO" id="GO:0006421">
    <property type="term" value="P:asparaginyl-tRNA aminoacylation"/>
    <property type="evidence" value="ECO:0007669"/>
    <property type="project" value="InterPro"/>
</dbReference>
<dbReference type="GO" id="GO:0009793">
    <property type="term" value="P:embryo development ending in seed dormancy"/>
    <property type="evidence" value="ECO:0000315"/>
    <property type="project" value="TAIR"/>
</dbReference>
<dbReference type="CDD" id="cd00776">
    <property type="entry name" value="AsxRS_core"/>
    <property type="match status" value="1"/>
</dbReference>
<dbReference type="CDD" id="cd04318">
    <property type="entry name" value="EcAsnRS_like_N"/>
    <property type="match status" value="1"/>
</dbReference>
<dbReference type="FunFam" id="3.30.930.10:FF:000016">
    <property type="entry name" value="Asparagine--tRNA ligase"/>
    <property type="match status" value="1"/>
</dbReference>
<dbReference type="Gene3D" id="3.30.930.10">
    <property type="entry name" value="Bira Bifunctional Protein, Domain 2"/>
    <property type="match status" value="1"/>
</dbReference>
<dbReference type="Gene3D" id="2.40.50.140">
    <property type="entry name" value="Nucleic acid-binding proteins"/>
    <property type="match status" value="1"/>
</dbReference>
<dbReference type="Gene3D" id="1.10.287.10">
    <property type="entry name" value="S15/NS1, RNA-binding"/>
    <property type="match status" value="1"/>
</dbReference>
<dbReference type="HAMAP" id="MF_00534">
    <property type="entry name" value="Asn_tRNA_synth"/>
    <property type="match status" value="1"/>
</dbReference>
<dbReference type="InterPro" id="IPR004364">
    <property type="entry name" value="Aa-tRNA-synt_II"/>
</dbReference>
<dbReference type="InterPro" id="IPR006195">
    <property type="entry name" value="aa-tRNA-synth_II"/>
</dbReference>
<dbReference type="InterPro" id="IPR045864">
    <property type="entry name" value="aa-tRNA-synth_II/BPL/LPL"/>
</dbReference>
<dbReference type="InterPro" id="IPR004522">
    <property type="entry name" value="Asn-tRNA-ligase"/>
</dbReference>
<dbReference type="InterPro" id="IPR002312">
    <property type="entry name" value="Asp/Asn-tRNA-synth_IIb"/>
</dbReference>
<dbReference type="InterPro" id="IPR012340">
    <property type="entry name" value="NA-bd_OB-fold"/>
</dbReference>
<dbReference type="InterPro" id="IPR004365">
    <property type="entry name" value="NA-bd_OB_tRNA"/>
</dbReference>
<dbReference type="InterPro" id="IPR000738">
    <property type="entry name" value="WHEP-TRS_dom"/>
</dbReference>
<dbReference type="NCBIfam" id="TIGR00457">
    <property type="entry name" value="asnS"/>
    <property type="match status" value="1"/>
</dbReference>
<dbReference type="NCBIfam" id="NF003037">
    <property type="entry name" value="PRK03932.1"/>
    <property type="match status" value="1"/>
</dbReference>
<dbReference type="PANTHER" id="PTHR22594:SF54">
    <property type="entry name" value="ASPARAGINE--TRNA LIGASE, CYTOPLASMIC 1-RELATED"/>
    <property type="match status" value="1"/>
</dbReference>
<dbReference type="PANTHER" id="PTHR22594">
    <property type="entry name" value="ASPARTYL/LYSYL-TRNA SYNTHETASE"/>
    <property type="match status" value="1"/>
</dbReference>
<dbReference type="Pfam" id="PF00152">
    <property type="entry name" value="tRNA-synt_2"/>
    <property type="match status" value="2"/>
</dbReference>
<dbReference type="Pfam" id="PF01336">
    <property type="entry name" value="tRNA_anti-codon"/>
    <property type="match status" value="1"/>
</dbReference>
<dbReference type="PRINTS" id="PR01042">
    <property type="entry name" value="TRNASYNTHASP"/>
</dbReference>
<dbReference type="SMART" id="SM00991">
    <property type="entry name" value="WHEP-TRS"/>
    <property type="match status" value="1"/>
</dbReference>
<dbReference type="SUPFAM" id="SSF55681">
    <property type="entry name" value="Class II aaRS and biotin synthetases"/>
    <property type="match status" value="1"/>
</dbReference>
<dbReference type="SUPFAM" id="SSF50249">
    <property type="entry name" value="Nucleic acid-binding proteins"/>
    <property type="match status" value="1"/>
</dbReference>
<dbReference type="PROSITE" id="PS50862">
    <property type="entry name" value="AA_TRNA_LIGASE_II"/>
    <property type="match status" value="1"/>
</dbReference>
<dbReference type="PROSITE" id="PS51185">
    <property type="entry name" value="WHEP_TRS_2"/>
    <property type="match status" value="1"/>
</dbReference>
<name>SYNC1_ARATH</name>
<proteinExistence type="evidence at protein level"/>
<organism>
    <name type="scientific">Arabidopsis thaliana</name>
    <name type="common">Mouse-ear cress</name>
    <dbReference type="NCBI Taxonomy" id="3702"/>
    <lineage>
        <taxon>Eukaryota</taxon>
        <taxon>Viridiplantae</taxon>
        <taxon>Streptophyta</taxon>
        <taxon>Embryophyta</taxon>
        <taxon>Tracheophyta</taxon>
        <taxon>Spermatophyta</taxon>
        <taxon>Magnoliopsida</taxon>
        <taxon>eudicotyledons</taxon>
        <taxon>Gunneridae</taxon>
        <taxon>Pentapetalae</taxon>
        <taxon>rosids</taxon>
        <taxon>malvids</taxon>
        <taxon>Brassicales</taxon>
        <taxon>Brassicaceae</taxon>
        <taxon>Camelineae</taxon>
        <taxon>Arabidopsis</taxon>
    </lineage>
</organism>
<evidence type="ECO:0000255" key="1"/>
<evidence type="ECO:0000303" key="2">
    <source>
    </source>
</evidence>
<evidence type="ECO:0000303" key="3">
    <source>
    </source>
</evidence>
<evidence type="ECO:0000305" key="4"/>
<evidence type="ECO:0000305" key="5">
    <source>
    </source>
</evidence>
<evidence type="ECO:0000305" key="6">
    <source>
    </source>
</evidence>
<evidence type="ECO:0007744" key="7">
    <source>
    </source>
</evidence>
<comment type="catalytic activity">
    <reaction evidence="4">
        <text>tRNA(Asn) + L-asparagine + ATP = L-asparaginyl-tRNA(Asn) + AMP + diphosphate + H(+)</text>
        <dbReference type="Rhea" id="RHEA:11180"/>
        <dbReference type="Rhea" id="RHEA-COMP:9659"/>
        <dbReference type="Rhea" id="RHEA-COMP:9674"/>
        <dbReference type="ChEBI" id="CHEBI:15378"/>
        <dbReference type="ChEBI" id="CHEBI:30616"/>
        <dbReference type="ChEBI" id="CHEBI:33019"/>
        <dbReference type="ChEBI" id="CHEBI:58048"/>
        <dbReference type="ChEBI" id="CHEBI:78442"/>
        <dbReference type="ChEBI" id="CHEBI:78515"/>
        <dbReference type="ChEBI" id="CHEBI:456215"/>
        <dbReference type="EC" id="6.1.1.22"/>
    </reaction>
</comment>
<comment type="subcellular location">
    <subcellularLocation>
        <location evidence="5">Cytoplasm</location>
        <location evidence="5">Cytosol</location>
    </subcellularLocation>
</comment>
<comment type="disruption phenotype">
    <text evidence="6">Embryo defective. Developmental arrest of the embryo at the cotyledon stage.</text>
</comment>
<comment type="similarity">
    <text evidence="4">Belongs to the class-II aminoacyl-tRNA synthetase family.</text>
</comment>
<accession>Q9SW96</accession>
<accession>A4FVR0</accession>
<reference key="1">
    <citation type="journal article" date="2000" name="J. Mol. Evol.">
        <title>Duplication and quadruplication of Arabidopsis thaliana cysteinyl- and asparaginyl-tRNA synthetase genes of organellar origin.</title>
        <authorList>
            <person name="Peeters N.M."/>
            <person name="Chapron A."/>
            <person name="Giritch A."/>
            <person name="Grandjean O."/>
            <person name="Lancelin D."/>
            <person name="Lhomme T."/>
            <person name="Vivrel A."/>
            <person name="Small I."/>
        </authorList>
    </citation>
    <scope>NUCLEOTIDE SEQUENCE [MRNA]</scope>
    <source>
        <strain>cv. Columbia</strain>
    </source>
</reference>
<reference key="2">
    <citation type="journal article" date="1998" name="DNA Res.">
        <title>Structural analysis of Arabidopsis thaliana chromosome 5. VI. Sequence features of the regions of 1,367,185 bp covered by 19 physically assigned P1 and TAC clones.</title>
        <authorList>
            <person name="Kotani H."/>
            <person name="Nakamura Y."/>
            <person name="Sato S."/>
            <person name="Asamizu E."/>
            <person name="Kaneko T."/>
            <person name="Miyajima N."/>
            <person name="Tabata S."/>
        </authorList>
    </citation>
    <scope>NUCLEOTIDE SEQUENCE [LARGE SCALE GENOMIC DNA]</scope>
    <source>
        <strain>cv. Columbia</strain>
    </source>
</reference>
<reference key="3">
    <citation type="journal article" date="2017" name="Plant J.">
        <title>Araport11: a complete reannotation of the Arabidopsis thaliana reference genome.</title>
        <authorList>
            <person name="Cheng C.Y."/>
            <person name="Krishnakumar V."/>
            <person name="Chan A.P."/>
            <person name="Thibaud-Nissen F."/>
            <person name="Schobel S."/>
            <person name="Town C.D."/>
        </authorList>
    </citation>
    <scope>GENOME REANNOTATION</scope>
    <source>
        <strain>cv. Columbia</strain>
    </source>
</reference>
<reference key="4">
    <citation type="submission" date="2007-03" db="EMBL/GenBank/DDBJ databases">
        <title>Arabidopsis ORF clones.</title>
        <authorList>
            <person name="Bautista V.R."/>
            <person name="Kim C.J."/>
            <person name="Chen H."/>
            <person name="Wu S.Y."/>
            <person name="De Los Reyes C."/>
            <person name="Ecker J.R."/>
        </authorList>
    </citation>
    <scope>NUCLEOTIDE SEQUENCE [LARGE SCALE MRNA]</scope>
    <source>
        <strain>cv. Columbia</strain>
    </source>
</reference>
<reference key="5">
    <citation type="journal article" date="2005" name="Plant J.">
        <title>Requirement of aminoacyl-tRNA synthetases for gametogenesis and embryo development in Arabidopsis.</title>
        <authorList>
            <person name="Berg M."/>
            <person name="Rogers R."/>
            <person name="Muralla R."/>
            <person name="Meinke D."/>
        </authorList>
    </citation>
    <scope>DISRUPTION PHENOTYPE</scope>
</reference>
<reference key="6">
    <citation type="journal article" date="2005" name="Proc. Natl. Acad. Sci. U.S.A.">
        <title>Dual targeting is the rule for organellar aminoacyl-tRNA synthetases in Arabidopsis thaliana.</title>
        <authorList>
            <person name="Duchene A.-M."/>
            <person name="Giritch A."/>
            <person name="Hoffmann B."/>
            <person name="Cognat V."/>
            <person name="Lancelin D."/>
            <person name="Peeters N.M."/>
            <person name="Zaepfel M."/>
            <person name="Marechal-Drouard L."/>
            <person name="Small I.D."/>
        </authorList>
    </citation>
    <scope>SUBCELLULAR LOCATION</scope>
</reference>
<reference key="7">
    <citation type="journal article" date="2012" name="Mol. Cell. Proteomics">
        <title>Comparative large-scale characterisation of plant vs. mammal proteins reveals similar and idiosyncratic N-alpha acetylation features.</title>
        <authorList>
            <person name="Bienvenut W.V."/>
            <person name="Sumpton D."/>
            <person name="Martinez A."/>
            <person name="Lilla S."/>
            <person name="Espagne C."/>
            <person name="Meinnel T."/>
            <person name="Giglione C."/>
        </authorList>
    </citation>
    <scope>ACETYLATION [LARGE SCALE ANALYSIS] AT ALA-2</scope>
    <scope>CLEAVAGE OF INITIATOR METHIONINE [LARGE SCALE ANALYSIS]</scope>
    <scope>IDENTIFICATION BY MASS SPECTROMETRY [LARGE SCALE ANALYSIS]</scope>
</reference>
<sequence>MADEIVPPATQLAAVSLENDGSTVQRAQFSNRVLIRTILDRPDGGAGLAGQTVRIGGWVKSGRDQGKRTFSFLAVNDGSCPANLQVMVDPSLYDVSNLVATGTCVTVDGVLKVPPKGKGTQQQIELNVVKVIDVGTVDASKYPLPKTKLTLETLRDVLHLRSRTNSISAVARIRNALAFATHSFFQEHSFLYIHTPIITTSDCEGAGEMFQATTLINYTERLEQDLIDNPPPTEADVEAARLIVIERGNVVAELKAAKASKEAITAAVAELKIAKETFAHIDERSRLRPGLPKKDGNIDYSKDFFGRQAFLTVSGQLQVETYACALSNVYTFGPTFRAENSHTSRHLAEFWMVEPEIAFADLEDDMNCAEAYVKYMCNWLLEKCYADMELMAKNFDSGCIDRLKLVASTPFGRITYTKAIELLEEAVAKGKEFDNNVEWGIDLASEHERYLTEVLFQKPLIVYNYPKGIKAFYMRLNDDEKTVAAMDVLVPKVGELIGGSQREERYDVIKKRIEEMGLPIEPYEWYLDLRRYGTVKHCGFGLGFERMILFATGLDNIRDVIPFPRYPGKADL</sequence>
<protein>
    <recommendedName>
        <fullName evidence="4">Asparagine--tRNA ligase, cytoplasmic 1</fullName>
        <ecNumber evidence="4">6.1.1.22</ecNumber>
    </recommendedName>
    <alternativeName>
        <fullName evidence="4">Asparaginyl-tRNA synthetase 1</fullName>
        <shortName evidence="4">AsnRS 1</shortName>
    </alternativeName>
    <alternativeName>
        <fullName evidence="3">Protein EMBRYO DEFECTIVE 2755</fullName>
    </alternativeName>
</protein>